<comment type="function">
    <text evidence="1">IF-3 binds to the 30S ribosomal subunit and shifts the equilibrium between 70S ribosomes and their 50S and 30S subunits in favor of the free subunits, thus enhancing the availability of 30S subunits on which protein synthesis initiation begins.</text>
</comment>
<comment type="subunit">
    <text evidence="1">Monomer.</text>
</comment>
<comment type="subcellular location">
    <subcellularLocation>
        <location evidence="1">Cytoplasm</location>
    </subcellularLocation>
</comment>
<comment type="similarity">
    <text evidence="1">Belongs to the IF-3 family.</text>
</comment>
<sequence length="179" mass="20776">MQRKPSQKSATDKLFNHRVNEKITGVSRVRLVSDDGVAIVSFEEALRKAKEENLDLVEVSADQELHVCKIIDYGKYKFELLKKSKEAKKKQHVINVKEIKIRPRIESHDYEIKKKHAQEFLGKGDKVKVSLRFRGREMMHSDLGMKVVYRMIEDLKEHGTAERDPIQDGKQIVVIINPK</sequence>
<name>IF3_LEPIC</name>
<reference key="1">
    <citation type="journal article" date="2004" name="J. Bacteriol.">
        <title>Comparative genomics of two Leptospira interrogans serovars reveals novel insights into physiology and pathogenesis.</title>
        <authorList>
            <person name="Nascimento A.L.T.O."/>
            <person name="Ko A.I."/>
            <person name="Martins E.A.L."/>
            <person name="Monteiro-Vitorello C.B."/>
            <person name="Ho P.L."/>
            <person name="Haake D.A."/>
            <person name="Verjovski-Almeida S."/>
            <person name="Hartskeerl R.A."/>
            <person name="Marques M.V."/>
            <person name="Oliveira M.C."/>
            <person name="Menck C.F.M."/>
            <person name="Leite L.C.C."/>
            <person name="Carrer H."/>
            <person name="Coutinho L.L."/>
            <person name="Degrave W.M."/>
            <person name="Dellagostin O.A."/>
            <person name="El-Dorry H."/>
            <person name="Ferro E.S."/>
            <person name="Ferro M.I.T."/>
            <person name="Furlan L.R."/>
            <person name="Gamberini M."/>
            <person name="Giglioti E.A."/>
            <person name="Goes-Neto A."/>
            <person name="Goldman G.H."/>
            <person name="Goldman M.H.S."/>
            <person name="Harakava R."/>
            <person name="Jeronimo S.M.B."/>
            <person name="Junqueira-de-Azevedo I.L.M."/>
            <person name="Kimura E.T."/>
            <person name="Kuramae E.E."/>
            <person name="Lemos E.G.M."/>
            <person name="Lemos M.V.F."/>
            <person name="Marino C.L."/>
            <person name="Nunes L.R."/>
            <person name="de Oliveira R.C."/>
            <person name="Pereira G.G."/>
            <person name="Reis M.S."/>
            <person name="Schriefer A."/>
            <person name="Siqueira W.J."/>
            <person name="Sommer P."/>
            <person name="Tsai S.M."/>
            <person name="Simpson A.J.G."/>
            <person name="Ferro J.A."/>
            <person name="Camargo L.E.A."/>
            <person name="Kitajima J.P."/>
            <person name="Setubal J.C."/>
            <person name="Van Sluys M.A."/>
        </authorList>
    </citation>
    <scope>NUCLEOTIDE SEQUENCE [LARGE SCALE GENOMIC DNA]</scope>
    <source>
        <strain>Fiocruz L1-130</strain>
    </source>
</reference>
<evidence type="ECO:0000255" key="1">
    <source>
        <dbReference type="HAMAP-Rule" id="MF_00080"/>
    </source>
</evidence>
<proteinExistence type="inferred from homology"/>
<keyword id="KW-0963">Cytoplasm</keyword>
<keyword id="KW-0396">Initiation factor</keyword>
<keyword id="KW-0648">Protein biosynthesis</keyword>
<feature type="chain" id="PRO_0000177534" description="Translation initiation factor IF-3">
    <location>
        <begin position="1"/>
        <end position="179"/>
    </location>
</feature>
<accession>Q72PK8</accession>
<organism>
    <name type="scientific">Leptospira interrogans serogroup Icterohaemorrhagiae serovar copenhageni (strain Fiocruz L1-130)</name>
    <dbReference type="NCBI Taxonomy" id="267671"/>
    <lineage>
        <taxon>Bacteria</taxon>
        <taxon>Pseudomonadati</taxon>
        <taxon>Spirochaetota</taxon>
        <taxon>Spirochaetia</taxon>
        <taxon>Leptospirales</taxon>
        <taxon>Leptospiraceae</taxon>
        <taxon>Leptospira</taxon>
    </lineage>
</organism>
<dbReference type="EMBL" id="AE016823">
    <property type="protein sequence ID" value="AAS71028.1"/>
    <property type="molecule type" value="Genomic_DNA"/>
</dbReference>
<dbReference type="RefSeq" id="WP_001189133.1">
    <property type="nucleotide sequence ID" value="NC_005823.1"/>
</dbReference>
<dbReference type="SMR" id="Q72PK8"/>
<dbReference type="GeneID" id="61142340"/>
<dbReference type="KEGG" id="lic:LIC_12463"/>
<dbReference type="HOGENOM" id="CLU_054919_3_2_12"/>
<dbReference type="Proteomes" id="UP000007037">
    <property type="component" value="Chromosome I"/>
</dbReference>
<dbReference type="GO" id="GO:0005829">
    <property type="term" value="C:cytosol"/>
    <property type="evidence" value="ECO:0007669"/>
    <property type="project" value="TreeGrafter"/>
</dbReference>
<dbReference type="GO" id="GO:0016020">
    <property type="term" value="C:membrane"/>
    <property type="evidence" value="ECO:0007669"/>
    <property type="project" value="TreeGrafter"/>
</dbReference>
<dbReference type="GO" id="GO:0043022">
    <property type="term" value="F:ribosome binding"/>
    <property type="evidence" value="ECO:0007669"/>
    <property type="project" value="TreeGrafter"/>
</dbReference>
<dbReference type="GO" id="GO:0003743">
    <property type="term" value="F:translation initiation factor activity"/>
    <property type="evidence" value="ECO:0007669"/>
    <property type="project" value="UniProtKB-UniRule"/>
</dbReference>
<dbReference type="GO" id="GO:0032790">
    <property type="term" value="P:ribosome disassembly"/>
    <property type="evidence" value="ECO:0007669"/>
    <property type="project" value="TreeGrafter"/>
</dbReference>
<dbReference type="FunFam" id="3.30.110.10:FF:000001">
    <property type="entry name" value="Translation initiation factor IF-3"/>
    <property type="match status" value="1"/>
</dbReference>
<dbReference type="Gene3D" id="3.30.110.10">
    <property type="entry name" value="Translation initiation factor 3 (IF-3), C-terminal domain"/>
    <property type="match status" value="1"/>
</dbReference>
<dbReference type="Gene3D" id="3.10.20.80">
    <property type="entry name" value="Translation initiation factor 3 (IF-3), N-terminal domain"/>
    <property type="match status" value="1"/>
</dbReference>
<dbReference type="HAMAP" id="MF_00080">
    <property type="entry name" value="IF_3"/>
    <property type="match status" value="1"/>
</dbReference>
<dbReference type="InterPro" id="IPR036788">
    <property type="entry name" value="T_IF-3_C_sf"/>
</dbReference>
<dbReference type="InterPro" id="IPR036787">
    <property type="entry name" value="T_IF-3_N_sf"/>
</dbReference>
<dbReference type="InterPro" id="IPR019813">
    <property type="entry name" value="Translation_initiation_fac3_CS"/>
</dbReference>
<dbReference type="InterPro" id="IPR001288">
    <property type="entry name" value="Translation_initiation_fac_3"/>
</dbReference>
<dbReference type="InterPro" id="IPR019815">
    <property type="entry name" value="Translation_initiation_fac_3_C"/>
</dbReference>
<dbReference type="InterPro" id="IPR019814">
    <property type="entry name" value="Translation_initiation_fac_3_N"/>
</dbReference>
<dbReference type="NCBIfam" id="TIGR00168">
    <property type="entry name" value="infC"/>
    <property type="match status" value="1"/>
</dbReference>
<dbReference type="PANTHER" id="PTHR10938">
    <property type="entry name" value="TRANSLATION INITIATION FACTOR IF-3"/>
    <property type="match status" value="1"/>
</dbReference>
<dbReference type="PANTHER" id="PTHR10938:SF0">
    <property type="entry name" value="TRANSLATION INITIATION FACTOR IF-3, MITOCHONDRIAL"/>
    <property type="match status" value="1"/>
</dbReference>
<dbReference type="Pfam" id="PF00707">
    <property type="entry name" value="IF3_C"/>
    <property type="match status" value="1"/>
</dbReference>
<dbReference type="Pfam" id="PF05198">
    <property type="entry name" value="IF3_N"/>
    <property type="match status" value="1"/>
</dbReference>
<dbReference type="SUPFAM" id="SSF55200">
    <property type="entry name" value="Translation initiation factor IF3, C-terminal domain"/>
    <property type="match status" value="1"/>
</dbReference>
<dbReference type="SUPFAM" id="SSF54364">
    <property type="entry name" value="Translation initiation factor IF3, N-terminal domain"/>
    <property type="match status" value="1"/>
</dbReference>
<dbReference type="PROSITE" id="PS00938">
    <property type="entry name" value="IF3"/>
    <property type="match status" value="1"/>
</dbReference>
<protein>
    <recommendedName>
        <fullName evidence="1">Translation initiation factor IF-3</fullName>
    </recommendedName>
</protein>
<gene>
    <name evidence="1" type="primary">infC</name>
    <name type="ordered locus">LIC_12463</name>
</gene>